<protein>
    <recommendedName>
        <fullName evidence="2">Large ribosomal subunit protein uL18c</fullName>
    </recommendedName>
    <alternativeName>
        <fullName>50S ribosomal protein L18, chloroplastic</fullName>
    </alternativeName>
</protein>
<accession>A0T0J4</accession>
<evidence type="ECO:0000250" key="1"/>
<evidence type="ECO:0000305" key="2"/>
<gene>
    <name type="primary">rpl18</name>
</gene>
<dbReference type="EMBL" id="EF067920">
    <property type="protein sequence ID" value="ABK20692.1"/>
    <property type="molecule type" value="Genomic_DNA"/>
</dbReference>
<dbReference type="RefSeq" id="YP_874469.1">
    <property type="nucleotide sequence ID" value="NC_008588.1"/>
</dbReference>
<dbReference type="SMR" id="A0T0J4"/>
<dbReference type="STRING" id="556484.A0T0J4"/>
<dbReference type="GeneID" id="4524644"/>
<dbReference type="InParanoid" id="A0T0J4"/>
<dbReference type="Proteomes" id="UP000000759">
    <property type="component" value="Chloroplast"/>
</dbReference>
<dbReference type="GO" id="GO:0009507">
    <property type="term" value="C:chloroplast"/>
    <property type="evidence" value="ECO:0007669"/>
    <property type="project" value="UniProtKB-SubCell"/>
</dbReference>
<dbReference type="GO" id="GO:1990904">
    <property type="term" value="C:ribonucleoprotein complex"/>
    <property type="evidence" value="ECO:0007669"/>
    <property type="project" value="UniProtKB-KW"/>
</dbReference>
<dbReference type="GO" id="GO:0005840">
    <property type="term" value="C:ribosome"/>
    <property type="evidence" value="ECO:0007669"/>
    <property type="project" value="UniProtKB-KW"/>
</dbReference>
<dbReference type="GO" id="GO:0008097">
    <property type="term" value="F:5S rRNA binding"/>
    <property type="evidence" value="ECO:0007669"/>
    <property type="project" value="TreeGrafter"/>
</dbReference>
<dbReference type="GO" id="GO:0003735">
    <property type="term" value="F:structural constituent of ribosome"/>
    <property type="evidence" value="ECO:0007669"/>
    <property type="project" value="InterPro"/>
</dbReference>
<dbReference type="GO" id="GO:0006412">
    <property type="term" value="P:translation"/>
    <property type="evidence" value="ECO:0007669"/>
    <property type="project" value="UniProtKB-UniRule"/>
</dbReference>
<dbReference type="CDD" id="cd00432">
    <property type="entry name" value="Ribosomal_L18_L5e"/>
    <property type="match status" value="1"/>
</dbReference>
<dbReference type="FunFam" id="3.30.420.100:FF:000003">
    <property type="entry name" value="50S ribosomal protein L18"/>
    <property type="match status" value="1"/>
</dbReference>
<dbReference type="Gene3D" id="3.30.420.100">
    <property type="match status" value="1"/>
</dbReference>
<dbReference type="HAMAP" id="MF_01337_B">
    <property type="entry name" value="Ribosomal_uL18_B"/>
    <property type="match status" value="1"/>
</dbReference>
<dbReference type="InterPro" id="IPR004389">
    <property type="entry name" value="Ribosomal_uL18_bac-type"/>
</dbReference>
<dbReference type="InterPro" id="IPR005484">
    <property type="entry name" value="Ribosomal_uL18_bac/euk"/>
</dbReference>
<dbReference type="NCBIfam" id="TIGR00060">
    <property type="entry name" value="L18_bact"/>
    <property type="match status" value="1"/>
</dbReference>
<dbReference type="PANTHER" id="PTHR12899">
    <property type="entry name" value="39S RIBOSOMAL PROTEIN L18, MITOCHONDRIAL"/>
    <property type="match status" value="1"/>
</dbReference>
<dbReference type="PANTHER" id="PTHR12899:SF3">
    <property type="entry name" value="LARGE RIBOSOMAL SUBUNIT PROTEIN UL18M"/>
    <property type="match status" value="1"/>
</dbReference>
<dbReference type="Pfam" id="PF00861">
    <property type="entry name" value="Ribosomal_L18p"/>
    <property type="match status" value="1"/>
</dbReference>
<dbReference type="SUPFAM" id="SSF53137">
    <property type="entry name" value="Translational machinery components"/>
    <property type="match status" value="1"/>
</dbReference>
<keyword id="KW-0150">Chloroplast</keyword>
<keyword id="KW-0934">Plastid</keyword>
<keyword id="KW-1185">Reference proteome</keyword>
<keyword id="KW-0687">Ribonucleoprotein</keyword>
<keyword id="KW-0689">Ribosomal protein</keyword>
<keyword id="KW-0694">RNA-binding</keyword>
<keyword id="KW-0699">rRNA-binding</keyword>
<proteinExistence type="inferred from homology"/>
<organism>
    <name type="scientific">Phaeodactylum tricornutum (strain CCAP 1055/1)</name>
    <dbReference type="NCBI Taxonomy" id="556484"/>
    <lineage>
        <taxon>Eukaryota</taxon>
        <taxon>Sar</taxon>
        <taxon>Stramenopiles</taxon>
        <taxon>Ochrophyta</taxon>
        <taxon>Bacillariophyta</taxon>
        <taxon>Bacillariophyceae</taxon>
        <taxon>Bacillariophycidae</taxon>
        <taxon>Naviculales</taxon>
        <taxon>Phaeodactylaceae</taxon>
        <taxon>Phaeodactylum</taxon>
    </lineage>
</organism>
<sequence length="135" mass="15414">MKFSQRTLLKLKNKNKKLRPNKYKKLKRETLRGRIKGTVERPRLSVYRSNENIYAQIIDDTNSKTLISCSTLDRSIKLVISTGRTCDASRLMGEKLAKLSLKKNITKIVFDRGPYLYHGRIKAVADGARAGGLQF</sequence>
<comment type="function">
    <text evidence="1">Binds 5S rRNA, forms part of the central protuberance of the 50S subunit.</text>
</comment>
<comment type="subunit">
    <text evidence="1">Part of the 50S ribosomal subunit; contacts the 5S rRNA.</text>
</comment>
<comment type="subcellular location">
    <subcellularLocation>
        <location>Plastid</location>
        <location>Chloroplast</location>
    </subcellularLocation>
</comment>
<comment type="similarity">
    <text evidence="2">Belongs to the universal ribosomal protein uL18 family.</text>
</comment>
<geneLocation type="chloroplast"/>
<name>RK18_PHATC</name>
<reference key="1">
    <citation type="journal article" date="2007" name="Mol. Genet. Genomics">
        <title>Chloroplast genomes of the diatoms Phaeodactylum tricornutum and Thalassiosira pseudonana: comparison with other plastid genomes of the red lineage.</title>
        <authorList>
            <person name="Oudot-Le Secq M.-P."/>
            <person name="Grimwood J."/>
            <person name="Shapiro H."/>
            <person name="Armbrust E.V."/>
            <person name="Bowler C."/>
            <person name="Green B.R."/>
        </authorList>
    </citation>
    <scope>NUCLEOTIDE SEQUENCE [LARGE SCALE GENOMIC DNA]</scope>
    <source>
        <strain>CCAP 1055/1</strain>
    </source>
</reference>
<feature type="chain" id="PRO_0000276393" description="Large ribosomal subunit protein uL18c">
    <location>
        <begin position="1"/>
        <end position="135"/>
    </location>
</feature>